<reference key="1">
    <citation type="journal article" date="2007" name="Theor. Appl. Genet.">
        <title>Complete chloroplast genome sequences of Hordeum vulgare, Sorghum bicolor and Agrostis stolonifera, and comparative analyses with other grass genomes.</title>
        <authorList>
            <person name="Saski C."/>
            <person name="Lee S.-B."/>
            <person name="Fjellheim S."/>
            <person name="Guda C."/>
            <person name="Jansen R.K."/>
            <person name="Luo H."/>
            <person name="Tomkins J."/>
            <person name="Rognli O.A."/>
            <person name="Daniell H."/>
            <person name="Clarke J.L."/>
        </authorList>
    </citation>
    <scope>NUCLEOTIDE SEQUENCE [LARGE SCALE GENOMIC DNA]</scope>
    <source>
        <strain>cv. Penn A-4</strain>
    </source>
</reference>
<organism>
    <name type="scientific">Agrostis stolonifera</name>
    <name type="common">Creeping bentgrass</name>
    <dbReference type="NCBI Taxonomy" id="63632"/>
    <lineage>
        <taxon>Eukaryota</taxon>
        <taxon>Viridiplantae</taxon>
        <taxon>Streptophyta</taxon>
        <taxon>Embryophyta</taxon>
        <taxon>Tracheophyta</taxon>
        <taxon>Spermatophyta</taxon>
        <taxon>Magnoliopsida</taxon>
        <taxon>Liliopsida</taxon>
        <taxon>Poales</taxon>
        <taxon>Poaceae</taxon>
        <taxon>BOP clade</taxon>
        <taxon>Pooideae</taxon>
        <taxon>Poodae</taxon>
        <taxon>Poeae</taxon>
        <taxon>Poeae Chloroplast Group 1 (Aveneae type)</taxon>
        <taxon>Agrostidodinae</taxon>
        <taxon>Agrostidinae</taxon>
        <taxon>Agrostis</taxon>
    </lineage>
</organism>
<sequence length="103" mass="12174">MAKKSLIQREKKRQKLEQKYHLIRQSLKKKIRSKVSPLSLSEKTKIREQLQSLPRNSAPTRLHRRCFLTGRPRANYRDFGLSGHVLREMVYECLLPGATRSSW</sequence>
<name>RR14_AGRST</name>
<evidence type="ECO:0000255" key="1">
    <source>
        <dbReference type="HAMAP-Rule" id="MF_00537"/>
    </source>
</evidence>
<evidence type="ECO:0000305" key="2"/>
<feature type="chain" id="PRO_0000276666" description="Small ribosomal subunit protein uS14c">
    <location>
        <begin position="1"/>
        <end position="103"/>
    </location>
</feature>
<comment type="function">
    <text evidence="1">Binds 16S rRNA, required for the assembly of 30S particles.</text>
</comment>
<comment type="subunit">
    <text evidence="1">Part of the 30S ribosomal subunit.</text>
</comment>
<comment type="subcellular location">
    <subcellularLocation>
        <location>Plastid</location>
        <location>Chloroplast</location>
    </subcellularLocation>
</comment>
<comment type="similarity">
    <text evidence="1">Belongs to the universal ribosomal protein uS14 family.</text>
</comment>
<gene>
    <name evidence="1" type="primary">rps14</name>
</gene>
<protein>
    <recommendedName>
        <fullName evidence="1">Small ribosomal subunit protein uS14c</fullName>
    </recommendedName>
    <alternativeName>
        <fullName evidence="2">30S ribosomal protein S14, chloroplastic</fullName>
    </alternativeName>
</protein>
<keyword id="KW-0150">Chloroplast</keyword>
<keyword id="KW-0934">Plastid</keyword>
<keyword id="KW-0687">Ribonucleoprotein</keyword>
<keyword id="KW-0689">Ribosomal protein</keyword>
<keyword id="KW-0694">RNA-binding</keyword>
<keyword id="KW-0699">rRNA-binding</keyword>
<proteinExistence type="inferred from homology"/>
<dbReference type="EMBL" id="EF115543">
    <property type="protein sequence ID" value="ABK79578.1"/>
    <property type="molecule type" value="Genomic_DNA"/>
</dbReference>
<dbReference type="RefSeq" id="YP_874734.1">
    <property type="nucleotide sequence ID" value="NC_008591.1"/>
</dbReference>
<dbReference type="SMR" id="A1EA06"/>
<dbReference type="GeneID" id="4524930"/>
<dbReference type="GO" id="GO:0009507">
    <property type="term" value="C:chloroplast"/>
    <property type="evidence" value="ECO:0007669"/>
    <property type="project" value="UniProtKB-SubCell"/>
</dbReference>
<dbReference type="GO" id="GO:0015935">
    <property type="term" value="C:small ribosomal subunit"/>
    <property type="evidence" value="ECO:0007669"/>
    <property type="project" value="TreeGrafter"/>
</dbReference>
<dbReference type="GO" id="GO:0019843">
    <property type="term" value="F:rRNA binding"/>
    <property type="evidence" value="ECO:0007669"/>
    <property type="project" value="UniProtKB-UniRule"/>
</dbReference>
<dbReference type="GO" id="GO:0003735">
    <property type="term" value="F:structural constituent of ribosome"/>
    <property type="evidence" value="ECO:0007669"/>
    <property type="project" value="InterPro"/>
</dbReference>
<dbReference type="GO" id="GO:0006412">
    <property type="term" value="P:translation"/>
    <property type="evidence" value="ECO:0007669"/>
    <property type="project" value="UniProtKB-UniRule"/>
</dbReference>
<dbReference type="FunFam" id="1.10.287.1480:FF:000001">
    <property type="entry name" value="30S ribosomal protein S14"/>
    <property type="match status" value="1"/>
</dbReference>
<dbReference type="Gene3D" id="1.10.287.1480">
    <property type="match status" value="1"/>
</dbReference>
<dbReference type="HAMAP" id="MF_00537">
    <property type="entry name" value="Ribosomal_uS14_1"/>
    <property type="match status" value="1"/>
</dbReference>
<dbReference type="InterPro" id="IPR001209">
    <property type="entry name" value="Ribosomal_uS14"/>
</dbReference>
<dbReference type="InterPro" id="IPR023036">
    <property type="entry name" value="Ribosomal_uS14_bac/plastid"/>
</dbReference>
<dbReference type="InterPro" id="IPR018271">
    <property type="entry name" value="Ribosomal_uS14_CS"/>
</dbReference>
<dbReference type="NCBIfam" id="NF006477">
    <property type="entry name" value="PRK08881.1"/>
    <property type="match status" value="1"/>
</dbReference>
<dbReference type="PANTHER" id="PTHR19836">
    <property type="entry name" value="30S RIBOSOMAL PROTEIN S14"/>
    <property type="match status" value="1"/>
</dbReference>
<dbReference type="PANTHER" id="PTHR19836:SF19">
    <property type="entry name" value="SMALL RIBOSOMAL SUBUNIT PROTEIN US14M"/>
    <property type="match status" value="1"/>
</dbReference>
<dbReference type="Pfam" id="PF00253">
    <property type="entry name" value="Ribosomal_S14"/>
    <property type="match status" value="1"/>
</dbReference>
<dbReference type="SUPFAM" id="SSF57716">
    <property type="entry name" value="Glucocorticoid receptor-like (DNA-binding domain)"/>
    <property type="match status" value="1"/>
</dbReference>
<dbReference type="PROSITE" id="PS00527">
    <property type="entry name" value="RIBOSOMAL_S14"/>
    <property type="match status" value="1"/>
</dbReference>
<geneLocation type="chloroplast"/>
<accession>A1EA06</accession>